<evidence type="ECO:0000255" key="1">
    <source>
        <dbReference type="HAMAP-Rule" id="MF_00624"/>
    </source>
</evidence>
<gene>
    <name evidence="1" type="primary">glgC</name>
    <name type="ordered locus">CPR_0086</name>
</gene>
<comment type="function">
    <text evidence="1">Involved in the biosynthesis of ADP-glucose, a building block required for the elongation reactions to produce glycogen. Catalyzes the reaction between ATP and alpha-D-glucose 1-phosphate (G1P) to produce pyrophosphate and ADP-Glc.</text>
</comment>
<comment type="catalytic activity">
    <reaction evidence="1">
        <text>alpha-D-glucose 1-phosphate + ATP + H(+) = ADP-alpha-D-glucose + diphosphate</text>
        <dbReference type="Rhea" id="RHEA:12120"/>
        <dbReference type="ChEBI" id="CHEBI:15378"/>
        <dbReference type="ChEBI" id="CHEBI:30616"/>
        <dbReference type="ChEBI" id="CHEBI:33019"/>
        <dbReference type="ChEBI" id="CHEBI:57498"/>
        <dbReference type="ChEBI" id="CHEBI:58601"/>
        <dbReference type="EC" id="2.7.7.27"/>
    </reaction>
</comment>
<comment type="pathway">
    <text evidence="1">Glycan biosynthesis; glycogen biosynthesis.</text>
</comment>
<comment type="subunit">
    <text evidence="1">Homotetramer.</text>
</comment>
<comment type="similarity">
    <text evidence="1">Belongs to the bacterial/plant glucose-1-phosphate adenylyltransferase family.</text>
</comment>
<name>GLGC_CLOPS</name>
<accession>Q0SWS5</accession>
<reference key="1">
    <citation type="journal article" date="2006" name="Genome Res.">
        <title>Skewed genomic variability in strains of the toxigenic bacterial pathogen, Clostridium perfringens.</title>
        <authorList>
            <person name="Myers G.S.A."/>
            <person name="Rasko D.A."/>
            <person name="Cheung J.K."/>
            <person name="Ravel J."/>
            <person name="Seshadri R."/>
            <person name="DeBoy R.T."/>
            <person name="Ren Q."/>
            <person name="Varga J."/>
            <person name="Awad M.M."/>
            <person name="Brinkac L.M."/>
            <person name="Daugherty S.C."/>
            <person name="Haft D.H."/>
            <person name="Dodson R.J."/>
            <person name="Madupu R."/>
            <person name="Nelson W.C."/>
            <person name="Rosovitz M.J."/>
            <person name="Sullivan S.A."/>
            <person name="Khouri H."/>
            <person name="Dimitrov G.I."/>
            <person name="Watkins K.L."/>
            <person name="Mulligan S."/>
            <person name="Benton J."/>
            <person name="Radune D."/>
            <person name="Fisher D.J."/>
            <person name="Atkins H.S."/>
            <person name="Hiscox T."/>
            <person name="Jost B.H."/>
            <person name="Billington S.J."/>
            <person name="Songer J.G."/>
            <person name="McClane B.A."/>
            <person name="Titball R.W."/>
            <person name="Rood J.I."/>
            <person name="Melville S.B."/>
            <person name="Paulsen I.T."/>
        </authorList>
    </citation>
    <scope>NUCLEOTIDE SEQUENCE [LARGE SCALE GENOMIC DNA]</scope>
    <source>
        <strain>SM101 / Type A</strain>
    </source>
</reference>
<feature type="chain" id="PRO_0000261862" description="Glucose-1-phosphate adenylyltransferase">
    <location>
        <begin position="1"/>
        <end position="388"/>
    </location>
</feature>
<feature type="binding site" evidence="1">
    <location>
        <position position="100"/>
    </location>
    <ligand>
        <name>alpha-D-glucose 1-phosphate</name>
        <dbReference type="ChEBI" id="CHEBI:58601"/>
    </ligand>
</feature>
<feature type="binding site" evidence="1">
    <location>
        <position position="165"/>
    </location>
    <ligand>
        <name>alpha-D-glucose 1-phosphate</name>
        <dbReference type="ChEBI" id="CHEBI:58601"/>
    </ligand>
</feature>
<feature type="binding site" evidence="1">
    <location>
        <begin position="180"/>
        <end position="181"/>
    </location>
    <ligand>
        <name>alpha-D-glucose 1-phosphate</name>
        <dbReference type="ChEBI" id="CHEBI:58601"/>
    </ligand>
</feature>
<feature type="binding site" evidence="1">
    <location>
        <position position="191"/>
    </location>
    <ligand>
        <name>alpha-D-glucose 1-phosphate</name>
        <dbReference type="ChEBI" id="CHEBI:58601"/>
    </ligand>
</feature>
<dbReference type="EC" id="2.7.7.27" evidence="1"/>
<dbReference type="EMBL" id="CP000312">
    <property type="protein sequence ID" value="ABG87378.1"/>
    <property type="molecule type" value="Genomic_DNA"/>
</dbReference>
<dbReference type="RefSeq" id="WP_011591253.1">
    <property type="nucleotide sequence ID" value="NC_008262.1"/>
</dbReference>
<dbReference type="SMR" id="Q0SWS5"/>
<dbReference type="KEGG" id="cpr:CPR_0086"/>
<dbReference type="UniPathway" id="UPA00164"/>
<dbReference type="Proteomes" id="UP000001824">
    <property type="component" value="Chromosome"/>
</dbReference>
<dbReference type="GO" id="GO:0005524">
    <property type="term" value="F:ATP binding"/>
    <property type="evidence" value="ECO:0007669"/>
    <property type="project" value="UniProtKB-KW"/>
</dbReference>
<dbReference type="GO" id="GO:0008878">
    <property type="term" value="F:glucose-1-phosphate adenylyltransferase activity"/>
    <property type="evidence" value="ECO:0007669"/>
    <property type="project" value="UniProtKB-UniRule"/>
</dbReference>
<dbReference type="GO" id="GO:0005978">
    <property type="term" value="P:glycogen biosynthetic process"/>
    <property type="evidence" value="ECO:0007669"/>
    <property type="project" value="UniProtKB-UniRule"/>
</dbReference>
<dbReference type="CDD" id="cd02508">
    <property type="entry name" value="ADP_Glucose_PP"/>
    <property type="match status" value="1"/>
</dbReference>
<dbReference type="CDD" id="cd04651">
    <property type="entry name" value="LbH_G1P_AT_C"/>
    <property type="match status" value="1"/>
</dbReference>
<dbReference type="Gene3D" id="2.160.10.10">
    <property type="entry name" value="Hexapeptide repeat proteins"/>
    <property type="match status" value="1"/>
</dbReference>
<dbReference type="Gene3D" id="3.90.550.10">
    <property type="entry name" value="Spore Coat Polysaccharide Biosynthesis Protein SpsA, Chain A"/>
    <property type="match status" value="1"/>
</dbReference>
<dbReference type="HAMAP" id="MF_00624">
    <property type="entry name" value="GlgC"/>
    <property type="match status" value="1"/>
</dbReference>
<dbReference type="InterPro" id="IPR011831">
    <property type="entry name" value="ADP-Glc_PPase"/>
</dbReference>
<dbReference type="InterPro" id="IPR005836">
    <property type="entry name" value="ADP_Glu_pyroP_CS"/>
</dbReference>
<dbReference type="InterPro" id="IPR023049">
    <property type="entry name" value="GlgC_bac"/>
</dbReference>
<dbReference type="InterPro" id="IPR056818">
    <property type="entry name" value="GlmU/GlgC-like_hexapep"/>
</dbReference>
<dbReference type="InterPro" id="IPR005835">
    <property type="entry name" value="NTP_transferase_dom"/>
</dbReference>
<dbReference type="InterPro" id="IPR029044">
    <property type="entry name" value="Nucleotide-diphossugar_trans"/>
</dbReference>
<dbReference type="InterPro" id="IPR011004">
    <property type="entry name" value="Trimer_LpxA-like_sf"/>
</dbReference>
<dbReference type="NCBIfam" id="TIGR02091">
    <property type="entry name" value="glgC"/>
    <property type="match status" value="1"/>
</dbReference>
<dbReference type="NCBIfam" id="NF003670">
    <property type="entry name" value="PRK05293.1"/>
    <property type="match status" value="1"/>
</dbReference>
<dbReference type="PANTHER" id="PTHR43523:SF2">
    <property type="entry name" value="GLUCOSE-1-PHOSPHATE ADENYLYLTRANSFERASE"/>
    <property type="match status" value="1"/>
</dbReference>
<dbReference type="PANTHER" id="PTHR43523">
    <property type="entry name" value="GLUCOSE-1-PHOSPHATE ADENYLYLTRANSFERASE-RELATED"/>
    <property type="match status" value="1"/>
</dbReference>
<dbReference type="Pfam" id="PF24894">
    <property type="entry name" value="Hexapep_GlmU"/>
    <property type="match status" value="1"/>
</dbReference>
<dbReference type="Pfam" id="PF00483">
    <property type="entry name" value="NTP_transferase"/>
    <property type="match status" value="1"/>
</dbReference>
<dbReference type="SUPFAM" id="SSF53448">
    <property type="entry name" value="Nucleotide-diphospho-sugar transferases"/>
    <property type="match status" value="1"/>
</dbReference>
<dbReference type="SUPFAM" id="SSF51161">
    <property type="entry name" value="Trimeric LpxA-like enzymes"/>
    <property type="match status" value="1"/>
</dbReference>
<dbReference type="PROSITE" id="PS00808">
    <property type="entry name" value="ADP_GLC_PYROPHOSPH_1"/>
    <property type="match status" value="1"/>
</dbReference>
<dbReference type="PROSITE" id="PS00809">
    <property type="entry name" value="ADP_GLC_PYROPHOSPH_2"/>
    <property type="match status" value="1"/>
</dbReference>
<dbReference type="PROSITE" id="PS00810">
    <property type="entry name" value="ADP_GLC_PYROPHOSPH_3"/>
    <property type="match status" value="1"/>
</dbReference>
<organism>
    <name type="scientific">Clostridium perfringens (strain SM101 / Type A)</name>
    <dbReference type="NCBI Taxonomy" id="289380"/>
    <lineage>
        <taxon>Bacteria</taxon>
        <taxon>Bacillati</taxon>
        <taxon>Bacillota</taxon>
        <taxon>Clostridia</taxon>
        <taxon>Eubacteriales</taxon>
        <taxon>Clostridiaceae</taxon>
        <taxon>Clostridium</taxon>
    </lineage>
</organism>
<sequence>MSKKEIVAMILAGGQGSRLGVLTKNLAKPAVPFGGKYRIIDFPLSNCSNSGIYTVGVLTQYKPLKLNEHIGIGDTWDLDRRDGGVSILPPYQKEKGGDWYKGTANAIYQNIEFIERYDPEYVLILSGDHIYKMDYDKMLEMHKQKEADATIAVINVPMHEASRFGIMNTNEDLSIYEFEEKPEHPKSTNASMGIYIFNWKILKKFLEEDELDPSSSNDFGKNIIPKMLNSGKKLIAYPFNGYWKDVGTIESLWEANMDLLKYEDELSLYDSEWKIYSANPVRPAQFIGKDAEIKSSLTVEGCIVHGKVENSVLFQGVYVGKGAIVKDAVIMPNTKIEDNVLIEKAIIGSEAIVCKGCKIGDGNKISVIASKEVVIGSKEIIEECAMVK</sequence>
<keyword id="KW-0067">ATP-binding</keyword>
<keyword id="KW-0119">Carbohydrate metabolism</keyword>
<keyword id="KW-0320">Glycogen biosynthesis</keyword>
<keyword id="KW-0321">Glycogen metabolism</keyword>
<keyword id="KW-0547">Nucleotide-binding</keyword>
<keyword id="KW-0548">Nucleotidyltransferase</keyword>
<keyword id="KW-0808">Transferase</keyword>
<protein>
    <recommendedName>
        <fullName evidence="1">Glucose-1-phosphate adenylyltransferase</fullName>
        <ecNumber evidence="1">2.7.7.27</ecNumber>
    </recommendedName>
    <alternativeName>
        <fullName evidence="1">ADP-glucose pyrophosphorylase</fullName>
        <shortName evidence="1">ADPGlc PPase</shortName>
    </alternativeName>
    <alternativeName>
        <fullName evidence="1">ADP-glucose synthase</fullName>
    </alternativeName>
</protein>
<proteinExistence type="inferred from homology"/>